<evidence type="ECO:0000250" key="1"/>
<evidence type="ECO:0000255" key="2"/>
<evidence type="ECO:0000269" key="3">
    <source>
    </source>
</evidence>
<evidence type="ECO:0000269" key="4">
    <source>
    </source>
</evidence>
<evidence type="ECO:0000269" key="5">
    <source>
    </source>
</evidence>
<evidence type="ECO:0000269" key="6">
    <source>
    </source>
</evidence>
<evidence type="ECO:0000269" key="7">
    <source>
    </source>
</evidence>
<evidence type="ECO:0007829" key="8">
    <source>
        <dbReference type="PDB" id="3UJZ"/>
    </source>
</evidence>
<evidence type="ECO:0007829" key="9">
    <source>
        <dbReference type="PDB" id="4DNY"/>
    </source>
</evidence>
<proteinExistence type="evidence at protein level"/>
<dbReference type="EC" id="3.4.24.-"/>
<dbReference type="EMBL" id="Y11831">
    <property type="protein sequence ID" value="CAA72517.1"/>
    <property type="molecule type" value="Genomic_DNA"/>
</dbReference>
<dbReference type="EMBL" id="Y11275">
    <property type="protein sequence ID" value="CAA72142.1"/>
    <property type="molecule type" value="Genomic_DNA"/>
</dbReference>
<dbReference type="EMBL" id="AF074613">
    <property type="protein sequence ID" value="AAC70099.1"/>
    <property type="molecule type" value="Genomic_DNA"/>
</dbReference>
<dbReference type="EMBL" id="AB011549">
    <property type="protein sequence ID" value="BAA31757.3"/>
    <property type="molecule type" value="Genomic_DNA"/>
</dbReference>
<dbReference type="EMBL" id="AY714880">
    <property type="protein sequence ID" value="AAU25886.1"/>
    <property type="molecule type" value="Genomic_DNA"/>
</dbReference>
<dbReference type="PIR" id="T42131">
    <property type="entry name" value="T42131"/>
</dbReference>
<dbReference type="RefSeq" id="NP_052607.1">
    <property type="nucleotide sequence ID" value="NC_002128.1"/>
</dbReference>
<dbReference type="RefSeq" id="WP_001358886.1">
    <property type="nucleotide sequence ID" value="NZ_VOAI01000036.1"/>
</dbReference>
<dbReference type="PDB" id="3UJZ">
    <property type="method" value="X-ray"/>
    <property type="resolution" value="2.50 A"/>
    <property type="chains" value="A=36-898"/>
</dbReference>
<dbReference type="PDB" id="4DNY">
    <property type="method" value="X-ray"/>
    <property type="resolution" value="1.61 A"/>
    <property type="chains" value="A=132-251"/>
</dbReference>
<dbReference type="PDBsum" id="3UJZ"/>
<dbReference type="PDBsum" id="4DNY"/>
<dbReference type="SMR" id="O82882"/>
<dbReference type="DIP" id="DIP-59647N"/>
<dbReference type="IntAct" id="O82882">
    <property type="interactions" value="1"/>
</dbReference>
<dbReference type="MEROPS" id="M66.001"/>
<dbReference type="GeneID" id="1789672"/>
<dbReference type="KEGG" id="ece:Z_L7031"/>
<dbReference type="KEGG" id="ecs:pO157p01"/>
<dbReference type="eggNOG" id="ENOG502ZA83">
    <property type="taxonomic scope" value="Bacteria"/>
</dbReference>
<dbReference type="OMA" id="MNKFHVN"/>
<dbReference type="EvolutionaryTrace" id="O82882"/>
<dbReference type="Proteomes" id="UP000000558">
    <property type="component" value="Plasmid pO157"/>
</dbReference>
<dbReference type="Proteomes" id="UP000002519">
    <property type="component" value="Plasmid pO157"/>
</dbReference>
<dbReference type="GO" id="GO:0005576">
    <property type="term" value="C:extracellular region"/>
    <property type="evidence" value="ECO:0007669"/>
    <property type="project" value="UniProtKB-SubCell"/>
</dbReference>
<dbReference type="GO" id="GO:0046872">
    <property type="term" value="F:metal ion binding"/>
    <property type="evidence" value="ECO:0007669"/>
    <property type="project" value="UniProtKB-KW"/>
</dbReference>
<dbReference type="GO" id="GO:0004222">
    <property type="term" value="F:metalloendopeptidase activity"/>
    <property type="evidence" value="ECO:0007669"/>
    <property type="project" value="InterPro"/>
</dbReference>
<dbReference type="GO" id="GO:0006508">
    <property type="term" value="P:proteolysis"/>
    <property type="evidence" value="ECO:0007669"/>
    <property type="project" value="UniProtKB-KW"/>
</dbReference>
<dbReference type="Gene3D" id="2.60.120.1230">
    <property type="match status" value="2"/>
</dbReference>
<dbReference type="Gene3D" id="2.60.20.40">
    <property type="match status" value="1"/>
</dbReference>
<dbReference type="InterPro" id="IPR051256">
    <property type="entry name" value="Dictomallein"/>
</dbReference>
<dbReference type="InterPro" id="IPR019503">
    <property type="entry name" value="Peptidase_M66_dom"/>
</dbReference>
<dbReference type="InterPro" id="IPR048990">
    <property type="entry name" value="StcE_b-sandwich"/>
</dbReference>
<dbReference type="InterPro" id="IPR040966">
    <property type="entry name" value="StcE_C"/>
</dbReference>
<dbReference type="InterPro" id="IPR022218">
    <property type="entry name" value="TagA_dom"/>
</dbReference>
<dbReference type="PANTHER" id="PTHR39540">
    <property type="match status" value="1"/>
</dbReference>
<dbReference type="PANTHER" id="PTHR39540:SF1">
    <property type="entry name" value="DICTOMALLEIN-1-RELATED"/>
    <property type="match status" value="1"/>
</dbReference>
<dbReference type="Pfam" id="PF17945">
    <property type="entry name" value="Crystall_4"/>
    <property type="match status" value="1"/>
</dbReference>
<dbReference type="Pfam" id="PF10462">
    <property type="entry name" value="Peptidase_M66"/>
    <property type="match status" value="1"/>
</dbReference>
<dbReference type="Pfam" id="PF20944">
    <property type="entry name" value="StcE_b-sandwich"/>
    <property type="match status" value="2"/>
</dbReference>
<dbReference type="Pfam" id="PF12561">
    <property type="entry name" value="TagA"/>
    <property type="match status" value="1"/>
</dbReference>
<dbReference type="PROSITE" id="PS51694">
    <property type="entry name" value="PEPTIDASE_M66"/>
    <property type="match status" value="1"/>
</dbReference>
<reference key="1">
    <citation type="submission" date="1997-03" db="EMBL/GenBank/DDBJ databases">
        <authorList>
            <person name="Brunder W."/>
        </authorList>
    </citation>
    <scope>NUCLEOTIDE SEQUENCE [GENOMIC DNA]</scope>
    <source>
        <strain>O157:H7 / EDL933 / ATCC 700927 / EHEC</strain>
    </source>
</reference>
<reference key="2">
    <citation type="journal article" date="1998" name="Nucleic Acids Res.">
        <title>The complete DNA sequence and analysis of the large virulence plasmid of Escherichia coli O157:H7.</title>
        <authorList>
            <person name="Burland V."/>
            <person name="Shao Y."/>
            <person name="Perna N.T."/>
            <person name="Plunkett G. III"/>
            <person name="Sofia H.J."/>
            <person name="Blattner F.R."/>
        </authorList>
    </citation>
    <scope>NUCLEOTIDE SEQUENCE [LARGE SCALE GENOMIC DNA]</scope>
    <source>
        <strain>O157:H7 / EDL933 / ATCC 700927 / EHEC</strain>
    </source>
</reference>
<reference key="3">
    <citation type="journal article" date="1998" name="DNA Res.">
        <title>Complete nucleotide sequences of 93-kb and 3.3-kb plasmids of an enterohemorrhagic Escherichia coli O157:H7 derived from Sakai outbreak.</title>
        <authorList>
            <person name="Makino K."/>
            <person name="Ishii K."/>
            <person name="Yasunaga T."/>
            <person name="Hattori M."/>
            <person name="Yokoyama K."/>
            <person name="Yatsudo H.C."/>
            <person name="Kubota Y."/>
            <person name="Yamaichi Y."/>
            <person name="Iida T."/>
            <person name="Yamamoto K."/>
            <person name="Honda T."/>
            <person name="Han C.G."/>
            <person name="Ohtsubo A."/>
            <person name="Kasamatsu M."/>
            <person name="Hayashi T."/>
            <person name="Kuhara S."/>
            <person name="Shinagawa H."/>
        </authorList>
    </citation>
    <scope>NUCLEOTIDE SEQUENCE [LARGE SCALE GENOMIC DNA]</scope>
    <source>
        <strain>O157:H7 / Sakai / RIMD 0509952 / EHEC</strain>
    </source>
</reference>
<reference key="4">
    <citation type="journal article" date="2005" name="Infect. Immun.">
        <title>The StcE protease contributes to intimate adherence of enterohemorrhagic Escherichia coli O157:H7 to host cells.</title>
        <authorList>
            <person name="Grys T.E."/>
            <person name="Siegel M.B."/>
            <person name="Lathem W.W."/>
            <person name="Welch R.A."/>
        </authorList>
    </citation>
    <scope>NUCLEOTIDE SEQUENCE [GENOMIC DNA] OF 36-898</scope>
    <scope>FUNCTION</scope>
    <source>
        <strain>O157:H7 / EDL933 / ATCC 700927 / EHEC</strain>
    </source>
</reference>
<reference key="5">
    <citation type="journal article" date="2000" name="Infect. Immun.">
        <title>The locus of enterocyte effacement (LEE)-encoded regulator controls expression of both LEE- and non-LEE-encoded virulence factors in enteropathogenic and enterohemorrhagic Escherichia coli.</title>
        <authorList>
            <person name="Elliott S.J."/>
            <person name="Sperandio V."/>
            <person name="Giron J.A."/>
            <person name="Shin S."/>
            <person name="Mellies J.L."/>
            <person name="Wainwright L."/>
            <person name="Hutcheson S.W."/>
            <person name="McDaniel T.K."/>
            <person name="Kaper J.B."/>
        </authorList>
    </citation>
    <scope>INDUCTION</scope>
</reference>
<reference key="6">
    <citation type="journal article" date="2002" name="Mol. Microbiol.">
        <title>StcE, a metalloprotease secreted by Escherichia coli O157:H7, specifically cleaves C1 esterase inhibitor.</title>
        <authorList>
            <person name="Lathem W.W."/>
            <person name="Grys T.E."/>
            <person name="Witowski S.E."/>
            <person name="Torres A.G."/>
            <person name="Kaper J.B."/>
            <person name="Tarr P.I."/>
            <person name="Welch R.A."/>
        </authorList>
    </citation>
    <scope>FUNCTION</scope>
    <scope>COFACTOR</scope>
    <scope>SUBCELLULAR LOCATION</scope>
    <scope>INDUCTION</scope>
    <scope>MUTAGENESIS OF GLU-447</scope>
    <source>
        <strain>O157:H7 / EDL933 / ATCC 700927 / EHEC</strain>
    </source>
</reference>
<reference key="7">
    <citation type="journal article" date="2004" name="J. Exp. Med.">
        <title>Potentiation of C1 esterase inhibitor by StcE, a metalloprotease secreted by Escherichia coli O157:H7.</title>
        <authorList>
            <person name="Lathem W.W."/>
            <person name="Bergsbaken T."/>
            <person name="Welch R.A."/>
        </authorList>
    </citation>
    <scope>FUNCTION</scope>
    <source>
        <strain>O157:H7 / EDL933 / ATCC 700927 / EHEC</strain>
    </source>
</reference>
<reference key="8">
    <citation type="journal article" date="2006" name="J. Bacteriol.">
        <title>Characterization of the StcE protease activity of Escherichia coli O157:H7.</title>
        <authorList>
            <person name="Grys T.E."/>
            <person name="Walters L.L."/>
            <person name="Welch R.A."/>
        </authorList>
    </citation>
    <scope>FUNCTION</scope>
    <scope>CHARACTERIZATION</scope>
    <scope>COFACTOR</scope>
    <scope>BIOPHYSICOCHEMICAL PROPERTIES</scope>
    <source>
        <strain>O157:H7 / EDL933 / ATCC 700927 / EHEC</strain>
    </source>
</reference>
<feature type="signal peptide" evidence="2">
    <location>
        <begin position="1"/>
        <end position="35"/>
    </location>
</feature>
<feature type="chain" id="PRO_0000248145" description="Metalloprotease StcE">
    <location>
        <begin position="36"/>
        <end position="898"/>
    </location>
</feature>
<feature type="domain" description="Peptidase M66">
    <location>
        <begin position="296"/>
        <end position="551"/>
    </location>
</feature>
<feature type="active site">
    <location>
        <position position="447"/>
    </location>
</feature>
<feature type="binding site" evidence="1">
    <location>
        <position position="446"/>
    </location>
    <ligand>
        <name>Zn(2+)</name>
        <dbReference type="ChEBI" id="CHEBI:29105"/>
        <note>catalytic</note>
    </ligand>
</feature>
<feature type="binding site" evidence="1">
    <location>
        <position position="450"/>
    </location>
    <ligand>
        <name>Zn(2+)</name>
        <dbReference type="ChEBI" id="CHEBI:29105"/>
        <note>catalytic</note>
    </ligand>
</feature>
<feature type="binding site" evidence="1">
    <location>
        <position position="456"/>
    </location>
    <ligand>
        <name>Zn(2+)</name>
        <dbReference type="ChEBI" id="CHEBI:29105"/>
        <note>catalytic</note>
    </ligand>
</feature>
<feature type="mutagenesis site" description="Prevents both cleavage and binding to SERPING1. Unable to aggregate T-cells. Still able to bind zinc." evidence="4">
    <original>E</original>
    <variation>D</variation>
    <location>
        <position position="447"/>
    </location>
</feature>
<feature type="strand" evidence="8">
    <location>
        <begin position="42"/>
        <end position="44"/>
    </location>
</feature>
<feature type="strand" evidence="8">
    <location>
        <begin position="54"/>
        <end position="56"/>
    </location>
</feature>
<feature type="strand" evidence="8">
    <location>
        <begin position="59"/>
        <end position="72"/>
    </location>
</feature>
<feature type="strand" evidence="8">
    <location>
        <begin position="82"/>
        <end position="86"/>
    </location>
</feature>
<feature type="strand" evidence="8">
    <location>
        <begin position="88"/>
        <end position="96"/>
    </location>
</feature>
<feature type="strand" evidence="8">
    <location>
        <begin position="99"/>
        <end position="101"/>
    </location>
</feature>
<feature type="strand" evidence="8">
    <location>
        <begin position="103"/>
        <end position="108"/>
    </location>
</feature>
<feature type="strand" evidence="8">
    <location>
        <begin position="114"/>
        <end position="119"/>
    </location>
</feature>
<feature type="helix" evidence="8">
    <location>
        <begin position="123"/>
        <end position="125"/>
    </location>
</feature>
<feature type="strand" evidence="9">
    <location>
        <begin position="146"/>
        <end position="148"/>
    </location>
</feature>
<feature type="strand" evidence="9">
    <location>
        <begin position="150"/>
        <end position="153"/>
    </location>
</feature>
<feature type="helix" evidence="9">
    <location>
        <begin position="156"/>
        <end position="160"/>
    </location>
</feature>
<feature type="helix" evidence="9">
    <location>
        <begin position="161"/>
        <end position="163"/>
    </location>
</feature>
<feature type="helix" evidence="9">
    <location>
        <begin position="168"/>
        <end position="174"/>
    </location>
</feature>
<feature type="strand" evidence="9">
    <location>
        <begin position="178"/>
        <end position="185"/>
    </location>
</feature>
<feature type="strand" evidence="9">
    <location>
        <begin position="191"/>
        <end position="194"/>
    </location>
</feature>
<feature type="helix" evidence="9">
    <location>
        <begin position="199"/>
        <end position="201"/>
    </location>
</feature>
<feature type="strand" evidence="9">
    <location>
        <begin position="205"/>
        <end position="211"/>
    </location>
</feature>
<feature type="strand" evidence="9">
    <location>
        <begin position="216"/>
        <end position="220"/>
    </location>
</feature>
<feature type="strand" evidence="9">
    <location>
        <begin position="223"/>
        <end position="227"/>
    </location>
</feature>
<feature type="strand" evidence="9">
    <location>
        <begin position="232"/>
        <end position="238"/>
    </location>
</feature>
<feature type="strand" evidence="9">
    <location>
        <begin position="241"/>
        <end position="244"/>
    </location>
</feature>
<feature type="helix" evidence="8">
    <location>
        <begin position="249"/>
        <end position="252"/>
    </location>
</feature>
<feature type="strand" evidence="8">
    <location>
        <begin position="253"/>
        <end position="255"/>
    </location>
</feature>
<feature type="strand" evidence="8">
    <location>
        <begin position="260"/>
        <end position="264"/>
    </location>
</feature>
<feature type="helix" evidence="8">
    <location>
        <begin position="266"/>
        <end position="268"/>
    </location>
</feature>
<feature type="strand" evidence="8">
    <location>
        <begin position="274"/>
        <end position="279"/>
    </location>
</feature>
<feature type="strand" evidence="8">
    <location>
        <begin position="282"/>
        <end position="286"/>
    </location>
</feature>
<feature type="strand" evidence="8">
    <location>
        <begin position="296"/>
        <end position="308"/>
    </location>
</feature>
<feature type="helix" evidence="8">
    <location>
        <begin position="315"/>
        <end position="318"/>
    </location>
</feature>
<feature type="helix" evidence="8">
    <location>
        <begin position="320"/>
        <end position="327"/>
    </location>
</feature>
<feature type="strand" evidence="8">
    <location>
        <begin position="333"/>
        <end position="340"/>
    </location>
</feature>
<feature type="strand" evidence="8">
    <location>
        <begin position="343"/>
        <end position="349"/>
    </location>
</feature>
<feature type="strand" evidence="8">
    <location>
        <begin position="355"/>
        <end position="358"/>
    </location>
</feature>
<feature type="helix" evidence="8">
    <location>
        <begin position="370"/>
        <end position="374"/>
    </location>
</feature>
<feature type="helix" evidence="8">
    <location>
        <begin position="375"/>
        <end position="380"/>
    </location>
</feature>
<feature type="helix" evidence="8">
    <location>
        <begin position="381"/>
        <end position="389"/>
    </location>
</feature>
<feature type="strand" evidence="8">
    <location>
        <begin position="393"/>
        <end position="397"/>
    </location>
</feature>
<feature type="strand" evidence="8">
    <location>
        <begin position="408"/>
        <end position="418"/>
    </location>
</feature>
<feature type="strand" evidence="8">
    <location>
        <begin position="421"/>
        <end position="424"/>
    </location>
</feature>
<feature type="strand" evidence="8">
    <location>
        <begin position="427"/>
        <end position="430"/>
    </location>
</feature>
<feature type="strand" evidence="8">
    <location>
        <begin position="433"/>
        <end position="435"/>
    </location>
</feature>
<feature type="helix" evidence="8">
    <location>
        <begin position="441"/>
        <end position="450"/>
    </location>
</feature>
<feature type="turn" evidence="8">
    <location>
        <begin position="451"/>
        <end position="453"/>
    </location>
</feature>
<feature type="helix" evidence="8">
    <location>
        <begin position="460"/>
        <end position="464"/>
    </location>
</feature>
<feature type="strand" evidence="8">
    <location>
        <begin position="471"/>
        <end position="473"/>
    </location>
</feature>
<feature type="strand" evidence="8">
    <location>
        <begin position="477"/>
        <end position="479"/>
    </location>
</feature>
<feature type="turn" evidence="8">
    <location>
        <begin position="480"/>
        <end position="483"/>
    </location>
</feature>
<feature type="strand" evidence="8">
    <location>
        <begin position="484"/>
        <end position="486"/>
    </location>
</feature>
<feature type="strand" evidence="8">
    <location>
        <begin position="488"/>
        <end position="493"/>
    </location>
</feature>
<feature type="strand" evidence="8">
    <location>
        <begin position="498"/>
        <end position="500"/>
    </location>
</feature>
<feature type="strand" evidence="8">
    <location>
        <begin position="503"/>
        <end position="505"/>
    </location>
</feature>
<feature type="strand" evidence="8">
    <location>
        <begin position="511"/>
        <end position="513"/>
    </location>
</feature>
<feature type="turn" evidence="8">
    <location>
        <begin position="517"/>
        <end position="520"/>
    </location>
</feature>
<feature type="helix" evidence="8">
    <location>
        <begin position="535"/>
        <end position="546"/>
    </location>
</feature>
<feature type="strand" evidence="8">
    <location>
        <begin position="548"/>
        <end position="551"/>
    </location>
</feature>
<feature type="strand" evidence="8">
    <location>
        <begin position="558"/>
        <end position="563"/>
    </location>
</feature>
<feature type="turn" evidence="8">
    <location>
        <begin position="564"/>
        <end position="567"/>
    </location>
</feature>
<feature type="strand" evidence="8">
    <location>
        <begin position="568"/>
        <end position="571"/>
    </location>
</feature>
<feature type="strand" evidence="8">
    <location>
        <begin position="682"/>
        <end position="695"/>
    </location>
</feature>
<feature type="strand" evidence="8">
    <location>
        <begin position="709"/>
        <end position="716"/>
    </location>
</feature>
<feature type="strand" evidence="8">
    <location>
        <begin position="755"/>
        <end position="762"/>
    </location>
</feature>
<feature type="helix" evidence="8">
    <location>
        <begin position="763"/>
        <end position="765"/>
    </location>
</feature>
<feature type="strand" evidence="8">
    <location>
        <begin position="793"/>
        <end position="798"/>
    </location>
</feature>
<feature type="strand" evidence="8">
    <location>
        <begin position="806"/>
        <end position="811"/>
    </location>
</feature>
<feature type="turn" evidence="8">
    <location>
        <begin position="812"/>
        <end position="814"/>
    </location>
</feature>
<feature type="strand" evidence="8">
    <location>
        <begin position="817"/>
        <end position="821"/>
    </location>
</feature>
<feature type="turn" evidence="8">
    <location>
        <begin position="832"/>
        <end position="836"/>
    </location>
</feature>
<feature type="strand" evidence="8">
    <location>
        <begin position="839"/>
        <end position="843"/>
    </location>
</feature>
<feature type="strand" evidence="8">
    <location>
        <begin position="847"/>
        <end position="857"/>
    </location>
</feature>
<feature type="strand" evidence="8">
    <location>
        <begin position="862"/>
        <end position="865"/>
    </location>
</feature>
<feature type="strand" evidence="8">
    <location>
        <begin position="867"/>
        <end position="869"/>
    </location>
</feature>
<feature type="helix" evidence="8">
    <location>
        <begin position="871"/>
        <end position="873"/>
    </location>
</feature>
<feature type="strand" evidence="8">
    <location>
        <begin position="874"/>
        <end position="878"/>
    </location>
</feature>
<feature type="strand" evidence="8">
    <location>
        <begin position="880"/>
        <end position="885"/>
    </location>
</feature>
<feature type="strand" evidence="8">
    <location>
        <begin position="891"/>
        <end position="897"/>
    </location>
</feature>
<geneLocation type="plasmid">
    <name>pO157</name>
</geneLocation>
<protein>
    <recommendedName>
        <fullName>Metalloprotease StcE</fullName>
        <ecNumber>3.4.24.-</ecNumber>
    </recommendedName>
    <alternativeName>
        <fullName>Mucinase</fullName>
    </alternativeName>
    <alternativeName>
        <fullName>Neutral zinc metalloprotease StcE</fullName>
    </alternativeName>
    <alternativeName>
        <fullName>Secreted protease of C1 esterase inhibitor from EHEC</fullName>
    </alternativeName>
</protein>
<comment type="function">
    <text evidence="4 5 6 7">Virulence factor that contributes to intimate adherence of enterohemorrhagic E.coli (EHEC) O157:H7 to host cells. Is able to cleave the secreted human mucin 7 (MUC7) and the glycoprotein 340 (DMBT1/GP340). Also cleaves human C1 inhibitor (SERPING1), a regulator of multiple inflammatory pathways, and binds and localizes it to bacterial and host cell surfaces, protecting them from complement-mediated lysis. Therefore, the current model proposes two roles for StcE during infection: it acts first as a mucinase, allowing passage of EHEC through the oral cavity by cleaving the salivary glycoproteins that are responsible for bacterial aggregation. Similarly, in the colon, StcE cleaves the glycoproteins that protect the intestinal epithelial surface, allowing EHEC to come into close contact with host cell membranes. Secondly, it acts as an anti-inflammatory agent by localizing SERPING1 to cell membranes.</text>
</comment>
<comment type="cofactor">
    <cofactor evidence="4 7">
        <name>Zn(2+)</name>
        <dbReference type="ChEBI" id="CHEBI:29105"/>
    </cofactor>
    <text evidence="4 7">Binds 1 zinc ion per subunit. Does not contain structural calcium, which is often associated with other metalloproteases.</text>
</comment>
<comment type="activity regulation">
    <text>Inhibited by divalent cation chelators such as BPS and EDTA.</text>
</comment>
<comment type="biophysicochemical properties">
    <kinetics>
        <KM evidence="7">0.13 uM for MUC7</KM>
        <KM evidence="7">0.27 uM for SERPING1</KM>
        <Vmax evidence="7">70.2 nM/min/ug enzyme for MUC7 cleavage</Vmax>
        <Vmax evidence="7">66.8 nM/min/ug enzyme for SERPING1 cleavage</Vmax>
        <text>Proteolytic activity is 2.5-fold more efficient with the secreted mucin MUC7 than with SERPING1.</text>
    </kinetics>
    <phDependence>
        <text evidence="7">Optimum pH is 6.5-7.0. Active from pH 6.1 to 9.0.</text>
    </phDependence>
    <temperatureDependence>
        <text evidence="7">Optimum temperature is 37-42 degrees Celsius. Active from 4 to 55 degrees Celsius. Inactive above 60 degrees Celsius.</text>
    </temperatureDependence>
</comment>
<comment type="interaction">
    <interactant intactId="EBI-15979286">
        <id>O82882</id>
    </interactant>
    <interactant intactId="EBI-1223454">
        <id>P05155</id>
        <label>SERPING1</label>
    </interactant>
    <organismsDiffer>true</organismsDiffer>
    <experiments>3</experiments>
</comment>
<comment type="subcellular location">
    <subcellularLocation>
        <location evidence="4">Secreted</location>
    </subcellularLocation>
    <text>Secreted via the etp type II secretion pathway.</text>
</comment>
<comment type="induction">
    <text evidence="3 4">Up-regulated by the LEE (locus of enterocyte effacement)-encoded regulator ler.</text>
</comment>
<comment type="miscellaneous">
    <text>Is resistant to proteolytic degradation by trypsin, chymotrypsin, human and bacterial elastase, but not by the fungal protease proteinase K.</text>
</comment>
<comment type="miscellaneous">
    <text>Cleavage of SERPING1 occurs within its heavily glycosylated N-terminal region and is different to that of elastase.</text>
</comment>
<name>STCE_ECO57</name>
<sequence>MNTKMNERWRTPMKLKYLSCTILAPLAIGVFSATAADNNSAIYFNTSQPINDLQGSLAAEVKFAQSQILPAHPKEGDSQPHLTSLRKSLLLVRPVKADDKTPVQVEARDDNNKILGTLTLYPPSSLPDTIYHLDGVPEGGIDFTPHNGTKKIINTVAEVNKLSDASGSSIHSHLTNNALVEIHTANGRWVRDIYLPQGPDLEGKMVRFVSSAGYSSTVFYGDRKVTLSVGNTLLFKYVNGQWFRSGELENNRITYAQHIWSAELPAHWIVPGLNLVIKQGNLSGRLNDIKIGAPGELLLHTIDIGMLTTPRDRFDFAKDKEAHREYFQTIPVSRMIVNNYAPLHLKEVMLPTGELLTDMDPGNGGWHSGTMRQRIGKELVSHGIDNANYGLNSTAGLGENSHPYVVAQLAAHNSRGNYANGIQVHGGSGGGGIVTLDSTLGNEFSHEVGHNYGLGHYVDGFKGSVHRSAENNNSTWGWDGDKKRFIPNFYPSQTNEKSCLNNQCQEPFDGHKFGFDAMAGGSPFSAANRFTMYTPNSSAIIQRFFENKAVFDSRSSTGFSKWNADTQEMEPYEHTIDRAEQITASVNELSESKMAELMAEYAVVKVHMWNGNWTRNIYIPTASADNRGSILTINHEAGYNSYLFINGDEKVVSQGYKKSFVSDGQFWKERDVVDTREARKPEQFGVPVTTLVGYYDPEGTLSSYIYPAMYGAYGFTYSDDSQNLSDNDCQLQVDTKEGQLRFRLANHRANNTVMNKFHINVPTESQPTQATLVCNNKILDTKSLTPAPEGLTYTVNGQALPAKENEGCIVSVNSGKRYCLPVGQRSGYSLPDWIVGQEVYVDSGAKAKVLLSDWDNLSYNRIGEFVGNVNPADMKKVKAWNGQYLDFSKPRSMRVVYK</sequence>
<organism>
    <name type="scientific">Escherichia coli O157:H7</name>
    <dbReference type="NCBI Taxonomy" id="83334"/>
    <lineage>
        <taxon>Bacteria</taxon>
        <taxon>Pseudomonadati</taxon>
        <taxon>Pseudomonadota</taxon>
        <taxon>Gammaproteobacteria</taxon>
        <taxon>Enterobacterales</taxon>
        <taxon>Enterobacteriaceae</taxon>
        <taxon>Escherichia</taxon>
    </lineage>
</organism>
<keyword id="KW-0002">3D-structure</keyword>
<keyword id="KW-0378">Hydrolase</keyword>
<keyword id="KW-0479">Metal-binding</keyword>
<keyword id="KW-0482">Metalloprotease</keyword>
<keyword id="KW-0614">Plasmid</keyword>
<keyword id="KW-0645">Protease</keyword>
<keyword id="KW-1185">Reference proteome</keyword>
<keyword id="KW-0964">Secreted</keyword>
<keyword id="KW-0732">Signal</keyword>
<keyword id="KW-0843">Virulence</keyword>
<keyword id="KW-0862">Zinc</keyword>
<accession>O82882</accession>
<accession>Q647K0</accession>
<accession>Q799Q8</accession>
<accession>Q7BSW2</accession>
<accession>Q9ZAL1</accession>
<accession>Q9ZGU1</accession>
<gene>
    <name type="primary">stcE</name>
    <name type="synonym">tagA</name>
    <name type="ordered locus">L7031</name>
    <name type="ordered locus">ECO57PM83</name>
</gene>